<dbReference type="EC" id="5.3.1.1" evidence="1 2"/>
<dbReference type="EMBL" id="BA000016">
    <property type="protein sequence ID" value="BAB81008.1"/>
    <property type="molecule type" value="Genomic_DNA"/>
</dbReference>
<dbReference type="RefSeq" id="WP_003450470.1">
    <property type="nucleotide sequence ID" value="NC_003366.1"/>
</dbReference>
<dbReference type="PDB" id="4Y8F">
    <property type="method" value="X-ray"/>
    <property type="resolution" value="1.54 A"/>
    <property type="chains" value="A=1-248"/>
</dbReference>
<dbReference type="PDBsum" id="4Y8F"/>
<dbReference type="SMR" id="Q8XKU1"/>
<dbReference type="STRING" id="195102.gene:10490565"/>
<dbReference type="GeneID" id="93002163"/>
<dbReference type="KEGG" id="cpe:CPE1302"/>
<dbReference type="HOGENOM" id="CLU_024251_2_3_9"/>
<dbReference type="SABIO-RK" id="Q8XKU1"/>
<dbReference type="UniPathway" id="UPA00109">
    <property type="reaction ID" value="UER00189"/>
</dbReference>
<dbReference type="UniPathway" id="UPA00138"/>
<dbReference type="EvolutionaryTrace" id="Q8XKU1"/>
<dbReference type="Proteomes" id="UP000000818">
    <property type="component" value="Chromosome"/>
</dbReference>
<dbReference type="GO" id="GO:0005829">
    <property type="term" value="C:cytosol"/>
    <property type="evidence" value="ECO:0007669"/>
    <property type="project" value="TreeGrafter"/>
</dbReference>
<dbReference type="GO" id="GO:0004807">
    <property type="term" value="F:triose-phosphate isomerase activity"/>
    <property type="evidence" value="ECO:0007669"/>
    <property type="project" value="UniProtKB-UniRule"/>
</dbReference>
<dbReference type="GO" id="GO:0006094">
    <property type="term" value="P:gluconeogenesis"/>
    <property type="evidence" value="ECO:0007669"/>
    <property type="project" value="UniProtKB-UniRule"/>
</dbReference>
<dbReference type="GO" id="GO:0046166">
    <property type="term" value="P:glyceraldehyde-3-phosphate biosynthetic process"/>
    <property type="evidence" value="ECO:0007669"/>
    <property type="project" value="TreeGrafter"/>
</dbReference>
<dbReference type="GO" id="GO:0019563">
    <property type="term" value="P:glycerol catabolic process"/>
    <property type="evidence" value="ECO:0007669"/>
    <property type="project" value="TreeGrafter"/>
</dbReference>
<dbReference type="GO" id="GO:0006096">
    <property type="term" value="P:glycolytic process"/>
    <property type="evidence" value="ECO:0007669"/>
    <property type="project" value="UniProtKB-UniRule"/>
</dbReference>
<dbReference type="CDD" id="cd00311">
    <property type="entry name" value="TIM"/>
    <property type="match status" value="1"/>
</dbReference>
<dbReference type="FunFam" id="3.20.20.70:FF:000016">
    <property type="entry name" value="Triosephosphate isomerase"/>
    <property type="match status" value="1"/>
</dbReference>
<dbReference type="Gene3D" id="3.20.20.70">
    <property type="entry name" value="Aldolase class I"/>
    <property type="match status" value="1"/>
</dbReference>
<dbReference type="HAMAP" id="MF_00147_B">
    <property type="entry name" value="TIM_B"/>
    <property type="match status" value="1"/>
</dbReference>
<dbReference type="InterPro" id="IPR013785">
    <property type="entry name" value="Aldolase_TIM"/>
</dbReference>
<dbReference type="InterPro" id="IPR035990">
    <property type="entry name" value="TIM_sf"/>
</dbReference>
<dbReference type="InterPro" id="IPR022896">
    <property type="entry name" value="TrioseP_Isoase_bac/euk"/>
</dbReference>
<dbReference type="InterPro" id="IPR000652">
    <property type="entry name" value="Triosephosphate_isomerase"/>
</dbReference>
<dbReference type="InterPro" id="IPR020861">
    <property type="entry name" value="Triosephosphate_isomerase_AS"/>
</dbReference>
<dbReference type="NCBIfam" id="TIGR00419">
    <property type="entry name" value="tim"/>
    <property type="match status" value="1"/>
</dbReference>
<dbReference type="PANTHER" id="PTHR21139">
    <property type="entry name" value="TRIOSEPHOSPHATE ISOMERASE"/>
    <property type="match status" value="1"/>
</dbReference>
<dbReference type="PANTHER" id="PTHR21139:SF42">
    <property type="entry name" value="TRIOSEPHOSPHATE ISOMERASE"/>
    <property type="match status" value="1"/>
</dbReference>
<dbReference type="Pfam" id="PF00121">
    <property type="entry name" value="TIM"/>
    <property type="match status" value="1"/>
</dbReference>
<dbReference type="SUPFAM" id="SSF51351">
    <property type="entry name" value="Triosephosphate isomerase (TIM)"/>
    <property type="match status" value="1"/>
</dbReference>
<dbReference type="PROSITE" id="PS00171">
    <property type="entry name" value="TIM_1"/>
    <property type="match status" value="1"/>
</dbReference>
<dbReference type="PROSITE" id="PS51440">
    <property type="entry name" value="TIM_2"/>
    <property type="match status" value="1"/>
</dbReference>
<sequence>MRTPIIAGNWKMHYTIDEAVKLVEELKPLVKDAKCEVVVCPTFVCLDAVKKAVEGTNIKVGAQNMHFEEKGAFTGEIAPRMLEAMNIDYVIIGHSERREYFNETDETCNKKVKAAFAHNLTPILCCGETLEQRENGTTNDVIKAQITADLEGLTKEQAEKVVIAYEPIWAIGTGKTATSDQANETIAAIRAMVAEMFGQEVADKVRIQYGGSVKPNTIAEQMAKSDIDGALVGGASLVAADFAQIVNY</sequence>
<evidence type="ECO:0000255" key="1">
    <source>
        <dbReference type="HAMAP-Rule" id="MF_00147"/>
    </source>
</evidence>
<evidence type="ECO:0000269" key="2">
    <source>
    </source>
</evidence>
<evidence type="ECO:0000303" key="3">
    <source>
    </source>
</evidence>
<evidence type="ECO:0007829" key="4">
    <source>
        <dbReference type="PDB" id="4Y8F"/>
    </source>
</evidence>
<name>TPIS_CLOPE</name>
<protein>
    <recommendedName>
        <fullName evidence="1 3">Triosephosphate isomerase</fullName>
        <shortName evidence="1 3">TIM</shortName>
        <shortName evidence="1">TPI</shortName>
        <ecNumber evidence="1 2">5.3.1.1</ecNumber>
    </recommendedName>
    <alternativeName>
        <fullName evidence="1">Triose-phosphate isomerase</fullName>
    </alternativeName>
</protein>
<accession>Q8XKU1</accession>
<proteinExistence type="evidence at protein level"/>
<comment type="function">
    <text evidence="1 2">Involved in the gluconeogenesis. Catalyzes stereospecifically the conversion of dihydroxyacetone phosphate (DHAP) to D-glyceraldehyde-3-phosphate (G3P).</text>
</comment>
<comment type="catalytic activity">
    <reaction evidence="1 2">
        <text>D-glyceraldehyde 3-phosphate = dihydroxyacetone phosphate</text>
        <dbReference type="Rhea" id="RHEA:18585"/>
        <dbReference type="ChEBI" id="CHEBI:57642"/>
        <dbReference type="ChEBI" id="CHEBI:59776"/>
        <dbReference type="EC" id="5.3.1.1"/>
    </reaction>
</comment>
<comment type="biophysicochemical properties">
    <kinetics>
        <KM evidence="2">0.72 mM for G3P</KM>
        <text evidence="2">kcat is 6348 sec(-1) for isomerase activity.</text>
    </kinetics>
</comment>
<comment type="pathway">
    <text evidence="1">Carbohydrate biosynthesis; gluconeogenesis.</text>
</comment>
<comment type="pathway">
    <text evidence="1">Carbohydrate degradation; glycolysis; D-glyceraldehyde 3-phosphate from glycerone phosphate: step 1/1.</text>
</comment>
<comment type="subunit">
    <text evidence="1 2">Homodimer.</text>
</comment>
<comment type="subcellular location">
    <subcellularLocation>
        <location evidence="1">Cytoplasm</location>
    </subcellularLocation>
</comment>
<comment type="similarity">
    <text evidence="1">Belongs to the triosephosphate isomerase family.</text>
</comment>
<organism>
    <name type="scientific">Clostridium perfringens (strain 13 / Type A)</name>
    <dbReference type="NCBI Taxonomy" id="195102"/>
    <lineage>
        <taxon>Bacteria</taxon>
        <taxon>Bacillati</taxon>
        <taxon>Bacillota</taxon>
        <taxon>Clostridia</taxon>
        <taxon>Eubacteriales</taxon>
        <taxon>Clostridiaceae</taxon>
        <taxon>Clostridium</taxon>
    </lineage>
</organism>
<reference key="1">
    <citation type="journal article" date="2002" name="Proc. Natl. Acad. Sci. U.S.A.">
        <title>Complete genome sequence of Clostridium perfringens, an anaerobic flesh-eater.</title>
        <authorList>
            <person name="Shimizu T."/>
            <person name="Ohtani K."/>
            <person name="Hirakawa H."/>
            <person name="Ohshima K."/>
            <person name="Yamashita A."/>
            <person name="Shiba T."/>
            <person name="Ogasawara N."/>
            <person name="Hattori M."/>
            <person name="Kuhara S."/>
            <person name="Hayashi H."/>
        </authorList>
    </citation>
    <scope>NUCLEOTIDE SEQUENCE [LARGE SCALE GENOMIC DNA]</scope>
    <source>
        <strain>13 / Type A</strain>
    </source>
</reference>
<reference key="2">
    <citation type="journal article" date="2015" name="Phys. Chem. Chem. Phys.">
        <title>Reversibility and two state behaviour in the thermal unfolding of oligomeric TIM barrel proteins.</title>
        <authorList>
            <person name="Romero-Romero S."/>
            <person name="Costas M."/>
            <person name="Rodriguez-Romero A."/>
            <person name="Alejandro Fernandez-Velasco D."/>
        </authorList>
    </citation>
    <scope>X-RAY CRYSTALLOGRAPHY (1.54 ANGSTROMS)</scope>
    <scope>FUNCTION</scope>
    <scope>CATALYTIC ACTIVITY</scope>
    <scope>BIOPHYSICOCHEMICAL PROPERTIES</scope>
    <scope>SUBUNIT</scope>
    <source>
        <strain>13 / Type A</strain>
    </source>
</reference>
<feature type="chain" id="PRO_0000090211" description="Triosephosphate isomerase">
    <location>
        <begin position="1"/>
        <end position="248"/>
    </location>
</feature>
<feature type="active site" description="Electrophile" evidence="1">
    <location>
        <position position="94"/>
    </location>
</feature>
<feature type="active site" description="Proton acceptor" evidence="1">
    <location>
        <position position="166"/>
    </location>
</feature>
<feature type="binding site" evidence="1">
    <location>
        <begin position="9"/>
        <end position="11"/>
    </location>
    <ligand>
        <name>substrate</name>
    </ligand>
</feature>
<feature type="binding site" evidence="1">
    <location>
        <position position="172"/>
    </location>
    <ligand>
        <name>substrate</name>
    </ligand>
</feature>
<feature type="binding site" evidence="1">
    <location>
        <position position="212"/>
    </location>
    <ligand>
        <name>substrate</name>
    </ligand>
</feature>
<feature type="binding site" evidence="1">
    <location>
        <begin position="233"/>
        <end position="234"/>
    </location>
    <ligand>
        <name>substrate</name>
    </ligand>
</feature>
<feature type="strand" evidence="4">
    <location>
        <begin position="5"/>
        <end position="9"/>
    </location>
</feature>
<feature type="helix" evidence="4">
    <location>
        <begin position="16"/>
        <end position="30"/>
    </location>
</feature>
<feature type="strand" evidence="4">
    <location>
        <begin position="34"/>
        <end position="40"/>
    </location>
</feature>
<feature type="helix" evidence="4">
    <location>
        <begin position="43"/>
        <end position="45"/>
    </location>
</feature>
<feature type="helix" evidence="4">
    <location>
        <begin position="46"/>
        <end position="52"/>
    </location>
</feature>
<feature type="turn" evidence="4">
    <location>
        <begin position="53"/>
        <end position="55"/>
    </location>
</feature>
<feature type="strand" evidence="4">
    <location>
        <begin position="56"/>
        <end position="63"/>
    </location>
</feature>
<feature type="strand" evidence="4">
    <location>
        <begin position="67"/>
        <end position="70"/>
    </location>
</feature>
<feature type="helix" evidence="4">
    <location>
        <begin position="79"/>
        <end position="84"/>
    </location>
</feature>
<feature type="strand" evidence="4">
    <location>
        <begin position="89"/>
        <end position="93"/>
    </location>
</feature>
<feature type="helix" evidence="4">
    <location>
        <begin position="95"/>
        <end position="100"/>
    </location>
</feature>
<feature type="helix" evidence="4">
    <location>
        <begin position="105"/>
        <end position="117"/>
    </location>
</feature>
<feature type="strand" evidence="4">
    <location>
        <begin position="121"/>
        <end position="126"/>
    </location>
</feature>
<feature type="helix" evidence="4">
    <location>
        <begin position="130"/>
        <end position="134"/>
    </location>
</feature>
<feature type="helix" evidence="4">
    <location>
        <begin position="138"/>
        <end position="149"/>
    </location>
</feature>
<feature type="turn" evidence="4">
    <location>
        <begin position="150"/>
        <end position="152"/>
    </location>
</feature>
<feature type="helix" evidence="4">
    <location>
        <begin position="155"/>
        <end position="158"/>
    </location>
</feature>
<feature type="strand" evidence="4">
    <location>
        <begin position="162"/>
        <end position="165"/>
    </location>
</feature>
<feature type="helix" evidence="4">
    <location>
        <begin position="168"/>
        <end position="170"/>
    </location>
</feature>
<feature type="helix" evidence="4">
    <location>
        <begin position="179"/>
        <end position="197"/>
    </location>
</feature>
<feature type="helix" evidence="4">
    <location>
        <begin position="199"/>
        <end position="204"/>
    </location>
</feature>
<feature type="strand" evidence="4">
    <location>
        <begin position="206"/>
        <end position="209"/>
    </location>
</feature>
<feature type="turn" evidence="4">
    <location>
        <begin position="215"/>
        <end position="217"/>
    </location>
</feature>
<feature type="helix" evidence="4">
    <location>
        <begin position="218"/>
        <end position="222"/>
    </location>
</feature>
<feature type="strand" evidence="4">
    <location>
        <begin position="229"/>
        <end position="232"/>
    </location>
</feature>
<feature type="helix" evidence="4">
    <location>
        <begin position="234"/>
        <end position="237"/>
    </location>
</feature>
<feature type="helix" evidence="4">
    <location>
        <begin position="239"/>
        <end position="246"/>
    </location>
</feature>
<keyword id="KW-0002">3D-structure</keyword>
<keyword id="KW-0963">Cytoplasm</keyword>
<keyword id="KW-0312">Gluconeogenesis</keyword>
<keyword id="KW-0324">Glycolysis</keyword>
<keyword id="KW-0413">Isomerase</keyword>
<keyword id="KW-1185">Reference proteome</keyword>
<gene>
    <name evidence="1" type="primary">tpiA</name>
    <name type="ordered locus">CPE1302</name>
</gene>